<comment type="function">
    <text evidence="1">Myoactive.</text>
</comment>
<comment type="subcellular location">
    <subcellularLocation>
        <location evidence="5">Secreted</location>
    </subcellularLocation>
</comment>
<comment type="similarity">
    <text evidence="2">Belongs to the pyrokinin family.</text>
</comment>
<reference evidence="5" key="1">
    <citation type="journal article" date="2009" name="BMC Evol. Biol.">
        <title>A proteomic approach for studying insect phylogeny: CAPA peptides of ancient insect taxa (Dictyoptera, Blattoptera) as a test case.</title>
        <authorList>
            <person name="Roth S."/>
            <person name="Fromm B."/>
            <person name="Gaede G."/>
            <person name="Predel R."/>
        </authorList>
    </citation>
    <scope>PROTEIN SEQUENCE</scope>
    <scope>AMIDATION AT LEU-17</scope>
    <source>
        <tissue evidence="3">Abdominal perisympathetic organs</tissue>
    </source>
</reference>
<proteinExistence type="evidence at protein level"/>
<keyword id="KW-0027">Amidation</keyword>
<keyword id="KW-0903">Direct protein sequencing</keyword>
<keyword id="KW-0527">Neuropeptide</keyword>
<keyword id="KW-0964">Secreted</keyword>
<feature type="peptide" id="PRO_0000378681" description="Pyrokinin-5" evidence="3">
    <location>
        <begin position="1"/>
        <end position="17"/>
    </location>
</feature>
<feature type="modified residue" description="Leucine amide" evidence="3">
    <location>
        <position position="17"/>
    </location>
</feature>
<organism>
    <name type="scientific">Blatta orientalis</name>
    <name type="common">Oriental cockroach</name>
    <dbReference type="NCBI Taxonomy" id="6976"/>
    <lineage>
        <taxon>Eukaryota</taxon>
        <taxon>Metazoa</taxon>
        <taxon>Ecdysozoa</taxon>
        <taxon>Arthropoda</taxon>
        <taxon>Hexapoda</taxon>
        <taxon>Insecta</taxon>
        <taxon>Pterygota</taxon>
        <taxon>Neoptera</taxon>
        <taxon>Polyneoptera</taxon>
        <taxon>Dictyoptera</taxon>
        <taxon>Blattodea</taxon>
        <taxon>Blattoidea</taxon>
        <taxon>Blattidae</taxon>
        <taxon>Blattinae</taxon>
        <taxon>Blatta</taxon>
    </lineage>
</organism>
<sequence length="17" mass="1653">GGGGSGETSGMWFGPRL</sequence>
<protein>
    <recommendedName>
        <fullName evidence="1">Pyrokinin-5</fullName>
    </recommendedName>
    <alternativeName>
        <fullName evidence="4">BlaOr-Capa-PK</fullName>
    </alternativeName>
    <alternativeName>
        <fullName evidence="1">FXPRL-amide</fullName>
    </alternativeName>
</protein>
<evidence type="ECO:0000250" key="1">
    <source>
        <dbReference type="UniProtKB" id="P82617"/>
    </source>
</evidence>
<evidence type="ECO:0000255" key="2"/>
<evidence type="ECO:0000269" key="3">
    <source>
    </source>
</evidence>
<evidence type="ECO:0000303" key="4">
    <source>
    </source>
</evidence>
<evidence type="ECO:0000305" key="5"/>
<name>PPK5_BLAOR</name>
<accession>P85559</accession>
<dbReference type="GO" id="GO:0005576">
    <property type="term" value="C:extracellular region"/>
    <property type="evidence" value="ECO:0007669"/>
    <property type="project" value="UniProtKB-SubCell"/>
</dbReference>
<dbReference type="GO" id="GO:0005184">
    <property type="term" value="F:neuropeptide hormone activity"/>
    <property type="evidence" value="ECO:0007669"/>
    <property type="project" value="InterPro"/>
</dbReference>
<dbReference type="GO" id="GO:0007218">
    <property type="term" value="P:neuropeptide signaling pathway"/>
    <property type="evidence" value="ECO:0007669"/>
    <property type="project" value="UniProtKB-KW"/>
</dbReference>
<dbReference type="InterPro" id="IPR001484">
    <property type="entry name" value="Pyrokinin_CS"/>
</dbReference>
<dbReference type="PROSITE" id="PS00539">
    <property type="entry name" value="PYROKININ"/>
    <property type="match status" value="1"/>
</dbReference>